<gene>
    <name evidence="1" type="primary">rpsQ</name>
    <name type="ordered locus">lpg0338</name>
</gene>
<protein>
    <recommendedName>
        <fullName evidence="1">Small ribosomal subunit protein uS17</fullName>
    </recommendedName>
    <alternativeName>
        <fullName evidence="2">30S ribosomal protein S17</fullName>
    </alternativeName>
</protein>
<proteinExistence type="inferred from homology"/>
<keyword id="KW-1185">Reference proteome</keyword>
<keyword id="KW-0687">Ribonucleoprotein</keyword>
<keyword id="KW-0689">Ribosomal protein</keyword>
<keyword id="KW-0694">RNA-binding</keyword>
<keyword id="KW-0699">rRNA-binding</keyword>
<reference key="1">
    <citation type="journal article" date="2004" name="Science">
        <title>The genomic sequence of the accidental pathogen Legionella pneumophila.</title>
        <authorList>
            <person name="Chien M."/>
            <person name="Morozova I."/>
            <person name="Shi S."/>
            <person name="Sheng H."/>
            <person name="Chen J."/>
            <person name="Gomez S.M."/>
            <person name="Asamani G."/>
            <person name="Hill K."/>
            <person name="Nuara J."/>
            <person name="Feder M."/>
            <person name="Rineer J."/>
            <person name="Greenberg J.J."/>
            <person name="Steshenko V."/>
            <person name="Park S.H."/>
            <person name="Zhao B."/>
            <person name="Teplitskaya E."/>
            <person name="Edwards J.R."/>
            <person name="Pampou S."/>
            <person name="Georghiou A."/>
            <person name="Chou I.-C."/>
            <person name="Iannuccilli W."/>
            <person name="Ulz M.E."/>
            <person name="Kim D.H."/>
            <person name="Geringer-Sameth A."/>
            <person name="Goldsberry C."/>
            <person name="Morozov P."/>
            <person name="Fischer S.G."/>
            <person name="Segal G."/>
            <person name="Qu X."/>
            <person name="Rzhetsky A."/>
            <person name="Zhang P."/>
            <person name="Cayanis E."/>
            <person name="De Jong P.J."/>
            <person name="Ju J."/>
            <person name="Kalachikov S."/>
            <person name="Shuman H.A."/>
            <person name="Russo J.J."/>
        </authorList>
    </citation>
    <scope>NUCLEOTIDE SEQUENCE [LARGE SCALE GENOMIC DNA]</scope>
    <source>
        <strain>Philadelphia 1 / ATCC 33152 / DSM 7513</strain>
    </source>
</reference>
<comment type="function">
    <text evidence="1">One of the primary rRNA binding proteins, it binds specifically to the 5'-end of 16S ribosomal RNA.</text>
</comment>
<comment type="subunit">
    <text evidence="1">Part of the 30S ribosomal subunit.</text>
</comment>
<comment type="similarity">
    <text evidence="1">Belongs to the universal ribosomal protein uS17 family.</text>
</comment>
<feature type="chain" id="PRO_0000233497" description="Small ribosomal subunit protein uS17">
    <location>
        <begin position="1"/>
        <end position="84"/>
    </location>
</feature>
<sequence length="84" mass="9637">MSTNSESNARTMIGKVVSDKMDKTIVVMIERTVKHPKYGKIMKRRTKLHAHDENQVCRVGNTVKIRESRPLSKTKSWVLVEVIS</sequence>
<dbReference type="EMBL" id="AE017354">
    <property type="protein sequence ID" value="AAU26435.1"/>
    <property type="molecule type" value="Genomic_DNA"/>
</dbReference>
<dbReference type="RefSeq" id="WP_010946087.1">
    <property type="nucleotide sequence ID" value="NC_002942.5"/>
</dbReference>
<dbReference type="RefSeq" id="YP_094382.1">
    <property type="nucleotide sequence ID" value="NC_002942.5"/>
</dbReference>
<dbReference type="SMR" id="Q5ZYN4"/>
<dbReference type="STRING" id="272624.lpg0338"/>
<dbReference type="PaxDb" id="272624-lpg0338"/>
<dbReference type="GeneID" id="57034341"/>
<dbReference type="KEGG" id="lpn:lpg0338"/>
<dbReference type="PATRIC" id="fig|272624.6.peg.345"/>
<dbReference type="eggNOG" id="COG0186">
    <property type="taxonomic scope" value="Bacteria"/>
</dbReference>
<dbReference type="HOGENOM" id="CLU_073626_1_1_6"/>
<dbReference type="OrthoDB" id="9811714at2"/>
<dbReference type="Proteomes" id="UP000000609">
    <property type="component" value="Chromosome"/>
</dbReference>
<dbReference type="GO" id="GO:0022627">
    <property type="term" value="C:cytosolic small ribosomal subunit"/>
    <property type="evidence" value="ECO:0007669"/>
    <property type="project" value="TreeGrafter"/>
</dbReference>
<dbReference type="GO" id="GO:0019843">
    <property type="term" value="F:rRNA binding"/>
    <property type="evidence" value="ECO:0007669"/>
    <property type="project" value="UniProtKB-UniRule"/>
</dbReference>
<dbReference type="GO" id="GO:0003735">
    <property type="term" value="F:structural constituent of ribosome"/>
    <property type="evidence" value="ECO:0007669"/>
    <property type="project" value="InterPro"/>
</dbReference>
<dbReference type="GO" id="GO:0006412">
    <property type="term" value="P:translation"/>
    <property type="evidence" value="ECO:0007669"/>
    <property type="project" value="UniProtKB-UniRule"/>
</dbReference>
<dbReference type="CDD" id="cd00364">
    <property type="entry name" value="Ribosomal_uS17"/>
    <property type="match status" value="1"/>
</dbReference>
<dbReference type="Gene3D" id="2.40.50.140">
    <property type="entry name" value="Nucleic acid-binding proteins"/>
    <property type="match status" value="1"/>
</dbReference>
<dbReference type="HAMAP" id="MF_01345_B">
    <property type="entry name" value="Ribosomal_uS17_B"/>
    <property type="match status" value="1"/>
</dbReference>
<dbReference type="InterPro" id="IPR012340">
    <property type="entry name" value="NA-bd_OB-fold"/>
</dbReference>
<dbReference type="InterPro" id="IPR000266">
    <property type="entry name" value="Ribosomal_uS17"/>
</dbReference>
<dbReference type="InterPro" id="IPR019984">
    <property type="entry name" value="Ribosomal_uS17_bact/chlr"/>
</dbReference>
<dbReference type="NCBIfam" id="NF004123">
    <property type="entry name" value="PRK05610.1"/>
    <property type="match status" value="1"/>
</dbReference>
<dbReference type="NCBIfam" id="TIGR03635">
    <property type="entry name" value="uS17_bact"/>
    <property type="match status" value="1"/>
</dbReference>
<dbReference type="PANTHER" id="PTHR10744">
    <property type="entry name" value="40S RIBOSOMAL PROTEIN S11 FAMILY MEMBER"/>
    <property type="match status" value="1"/>
</dbReference>
<dbReference type="PANTHER" id="PTHR10744:SF1">
    <property type="entry name" value="SMALL RIBOSOMAL SUBUNIT PROTEIN US17M"/>
    <property type="match status" value="1"/>
</dbReference>
<dbReference type="Pfam" id="PF00366">
    <property type="entry name" value="Ribosomal_S17"/>
    <property type="match status" value="1"/>
</dbReference>
<dbReference type="PRINTS" id="PR00973">
    <property type="entry name" value="RIBOSOMALS17"/>
</dbReference>
<dbReference type="SUPFAM" id="SSF50249">
    <property type="entry name" value="Nucleic acid-binding proteins"/>
    <property type="match status" value="1"/>
</dbReference>
<organism>
    <name type="scientific">Legionella pneumophila subsp. pneumophila (strain Philadelphia 1 / ATCC 33152 / DSM 7513)</name>
    <dbReference type="NCBI Taxonomy" id="272624"/>
    <lineage>
        <taxon>Bacteria</taxon>
        <taxon>Pseudomonadati</taxon>
        <taxon>Pseudomonadota</taxon>
        <taxon>Gammaproteobacteria</taxon>
        <taxon>Legionellales</taxon>
        <taxon>Legionellaceae</taxon>
        <taxon>Legionella</taxon>
    </lineage>
</organism>
<name>RS17_LEGPH</name>
<evidence type="ECO:0000255" key="1">
    <source>
        <dbReference type="HAMAP-Rule" id="MF_01345"/>
    </source>
</evidence>
<evidence type="ECO:0000305" key="2"/>
<accession>Q5ZYN4</accession>